<accession>Q8U2A9</accession>
<evidence type="ECO:0000255" key="1">
    <source>
        <dbReference type="HAMAP-Rule" id="MF_02131"/>
    </source>
</evidence>
<evidence type="ECO:0000269" key="2">
    <source>
    </source>
</evidence>
<evidence type="ECO:0000303" key="3">
    <source>
    </source>
</evidence>
<organism>
    <name type="scientific">Pyrococcus furiosus (strain ATCC 43587 / DSM 3638 / JCM 8422 / Vc1)</name>
    <dbReference type="NCBI Taxonomy" id="186497"/>
    <lineage>
        <taxon>Archaea</taxon>
        <taxon>Methanobacteriati</taxon>
        <taxon>Methanobacteriota</taxon>
        <taxon>Thermococci</taxon>
        <taxon>Thermococcales</taxon>
        <taxon>Thermococcaceae</taxon>
        <taxon>Pyrococcus</taxon>
    </lineage>
</organism>
<gene>
    <name evidence="1 3" type="primary">mptE</name>
    <name type="ordered locus">PF0930</name>
</gene>
<keyword id="KW-0067">ATP-binding</keyword>
<keyword id="KW-0418">Kinase</keyword>
<keyword id="KW-0460">Magnesium</keyword>
<keyword id="KW-0547">Nucleotide-binding</keyword>
<keyword id="KW-1185">Reference proteome</keyword>
<keyword id="KW-0808">Transferase</keyword>
<dbReference type="EC" id="2.7.6.3" evidence="1 2"/>
<dbReference type="EMBL" id="AE009950">
    <property type="protein sequence ID" value="AAL81054.1"/>
    <property type="molecule type" value="Genomic_DNA"/>
</dbReference>
<dbReference type="RefSeq" id="WP_011012066.1">
    <property type="nucleotide sequence ID" value="NZ_CP023154.1"/>
</dbReference>
<dbReference type="SMR" id="Q8U2A9"/>
<dbReference type="STRING" id="186497.PF0930"/>
<dbReference type="PaxDb" id="186497-PF0930"/>
<dbReference type="GeneID" id="41712740"/>
<dbReference type="KEGG" id="pfu:PF0930"/>
<dbReference type="PATRIC" id="fig|186497.12.peg.985"/>
<dbReference type="eggNOG" id="arCOG04303">
    <property type="taxonomic scope" value="Archaea"/>
</dbReference>
<dbReference type="HOGENOM" id="CLU_093043_0_0_2"/>
<dbReference type="OrthoDB" id="34207at2157"/>
<dbReference type="PhylomeDB" id="Q8U2A9"/>
<dbReference type="Proteomes" id="UP000001013">
    <property type="component" value="Chromosome"/>
</dbReference>
<dbReference type="GO" id="GO:0003848">
    <property type="term" value="F:2-amino-4-hydroxy-6-hydroxymethyldihydropteridine diphosphokinase activity"/>
    <property type="evidence" value="ECO:0007669"/>
    <property type="project" value="UniProtKB-UniRule"/>
</dbReference>
<dbReference type="GO" id="GO:0005524">
    <property type="term" value="F:ATP binding"/>
    <property type="evidence" value="ECO:0007669"/>
    <property type="project" value="UniProtKB-UniRule"/>
</dbReference>
<dbReference type="GO" id="GO:0016301">
    <property type="term" value="F:kinase activity"/>
    <property type="evidence" value="ECO:0007669"/>
    <property type="project" value="UniProtKB-KW"/>
</dbReference>
<dbReference type="GO" id="GO:0000287">
    <property type="term" value="F:magnesium ion binding"/>
    <property type="evidence" value="ECO:0007669"/>
    <property type="project" value="UniProtKB-UniRule"/>
</dbReference>
<dbReference type="GO" id="GO:0004788">
    <property type="term" value="F:thiamine diphosphokinase activity"/>
    <property type="evidence" value="ECO:0007669"/>
    <property type="project" value="InterPro"/>
</dbReference>
<dbReference type="GO" id="GO:0009229">
    <property type="term" value="P:thiamine diphosphate biosynthetic process"/>
    <property type="evidence" value="ECO:0007669"/>
    <property type="project" value="InterPro"/>
</dbReference>
<dbReference type="Gene3D" id="3.40.50.10240">
    <property type="entry name" value="Thiamin pyrophosphokinase, catalytic domain"/>
    <property type="match status" value="1"/>
</dbReference>
<dbReference type="HAMAP" id="MF_02131">
    <property type="entry name" value="HMPDK_arch"/>
    <property type="match status" value="1"/>
</dbReference>
<dbReference type="InterPro" id="IPR027510">
    <property type="entry name" value="HMPDK_MptE"/>
</dbReference>
<dbReference type="InterPro" id="IPR002826">
    <property type="entry name" value="MptE-like"/>
</dbReference>
<dbReference type="InterPro" id="IPR036759">
    <property type="entry name" value="TPK_catalytic_sf"/>
</dbReference>
<dbReference type="PANTHER" id="PTHR39648">
    <property type="entry name" value="6-HYDROXYMETHYL-7,8-DIHYDROPTERIN PYROPHOSPHOKINASE"/>
    <property type="match status" value="1"/>
</dbReference>
<dbReference type="PANTHER" id="PTHR39648:SF1">
    <property type="entry name" value="6-HYDROXYMETHYL-7,8-DIHYDROPTERIN PYROPHOSPHOKINASE"/>
    <property type="match status" value="1"/>
</dbReference>
<dbReference type="Pfam" id="PF01973">
    <property type="entry name" value="MptE-like"/>
    <property type="match status" value="1"/>
</dbReference>
<dbReference type="SUPFAM" id="SSF63999">
    <property type="entry name" value="Thiamin pyrophosphokinase, catalytic domain"/>
    <property type="match status" value="1"/>
</dbReference>
<name>MPTE_PYRFU</name>
<feature type="chain" id="PRO_0000420356" description="6-hydroxymethyl-7,8-dihydropterin pyrophosphokinase">
    <location>
        <begin position="1"/>
        <end position="231"/>
    </location>
</feature>
<comment type="function">
    <text evidence="1 2">Catalyzes the transfer of diphosphate from ATP to 6-hydroxymethyl-7,8-dihydropterin (6-HMD), leading to 6-hydroxymethyl-7,8-dihydropterin diphosphate (6-HMDP). To a lesser extent, can also use CTP, UTP, and GTP as the nucleotide triphosphate substrate.</text>
</comment>
<comment type="catalytic activity">
    <reaction evidence="1 2">
        <text>6-hydroxymethyl-7,8-dihydropterin + ATP = (7,8-dihydropterin-6-yl)methyl diphosphate + AMP + H(+)</text>
        <dbReference type="Rhea" id="RHEA:11412"/>
        <dbReference type="ChEBI" id="CHEBI:15378"/>
        <dbReference type="ChEBI" id="CHEBI:30616"/>
        <dbReference type="ChEBI" id="CHEBI:44841"/>
        <dbReference type="ChEBI" id="CHEBI:72950"/>
        <dbReference type="ChEBI" id="CHEBI:456215"/>
        <dbReference type="EC" id="2.7.6.3"/>
    </reaction>
</comment>
<comment type="cofactor">
    <cofactor evidence="1">
        <name>Mg(2+)</name>
        <dbReference type="ChEBI" id="CHEBI:18420"/>
    </cofactor>
</comment>
<comment type="similarity">
    <text evidence="1">Belongs to the archaeal 6-HMPDK family.</text>
</comment>
<proteinExistence type="evidence at protein level"/>
<protein>
    <recommendedName>
        <fullName evidence="1">6-hydroxymethyl-7,8-dihydropterin pyrophosphokinase</fullName>
        <shortName evidence="1">HPPK</shortName>
        <ecNumber evidence="1 2">2.7.6.3</ecNumber>
    </recommendedName>
    <alternativeName>
        <fullName evidence="1">2-amino-4-hydroxy-6-hydroxymethyldihydropteridine pyrophosphokinase</fullName>
    </alternativeName>
    <alternativeName>
        <fullName evidence="1">6-hydroxymethyl-7,8-dihydropterin diphosphokinase</fullName>
        <shortName evidence="1 3">6-HMPDK</shortName>
    </alternativeName>
    <alternativeName>
        <fullName evidence="1 3">7,8-dihydro-6-hydroxymethylpterin diphosphokinase</fullName>
    </alternativeName>
    <alternativeName>
        <fullName evidence="1">7,8-dihydro-6-hydroxymethylpterin pyrophosphokinase</fullName>
        <shortName evidence="1">PPPK</shortName>
    </alternativeName>
</protein>
<reference key="1">
    <citation type="journal article" date="1999" name="Genetics">
        <title>Divergence of the hyperthermophilic archaea Pyrococcus furiosus and P. horikoshii inferred from complete genomic sequences.</title>
        <authorList>
            <person name="Maeder D.L."/>
            <person name="Weiss R.B."/>
            <person name="Dunn D.M."/>
            <person name="Cherry J.L."/>
            <person name="Gonzalez J.M."/>
            <person name="DiRuggiero J."/>
            <person name="Robb F.T."/>
        </authorList>
    </citation>
    <scope>NUCLEOTIDE SEQUENCE [LARGE SCALE GENOMIC DNA]</scope>
    <source>
        <strain>ATCC 43587 / DSM 3638 / JCM 8422 / Vc1</strain>
    </source>
</reference>
<reference key="2">
    <citation type="journal article" date="2012" name="ACS Chem. Biol.">
        <title>Comparative genomics guided discovery of two missing archaeal enzyme families involved in the biosynthesis of the pterin moiety of tetrahydromethanopterin and tetrahydrofolate.</title>
        <authorList>
            <person name="Crecy-Lagard V.D."/>
            <person name="Phillips G."/>
            <person name="Grochowski L.L."/>
            <person name="Yacoubi B.E."/>
            <person name="Jenney F."/>
            <person name="Adams M.W."/>
            <person name="Murzin A.G."/>
            <person name="White R.H."/>
        </authorList>
    </citation>
    <scope>FUNCTION</scope>
    <scope>CATALYTIC ACTIVITY</scope>
    <scope>GENE NAME</scope>
    <scope>SUBSTRATE SPECIFICITY</scope>
</reference>
<sequence>MKWEEWKPFYERIVKEMGYSIEEDRRAAELLRDILMENDNYIIKEELNSIIMQKVYVFGAGPNLEEALKKGDFKDGTKIAADGATSALLEYGITPDVVVTDLDGRIRDLLEASRKAVMVVHAHGDNMDKLPLVVEFPLVLGTCQTEPLDIVYNFGGFTDGDRAAFLAEEMGAKEIVLVGFDFSGIVGKWSKPWLRDHTPAWESKMKKLKFARELLEWLKNNGRAKIIEFSI</sequence>